<feature type="signal peptide" evidence="2">
    <location>
        <begin position="1"/>
        <end position="4"/>
    </location>
</feature>
<feature type="propeptide" id="PRO_0000346701" evidence="1">
    <location>
        <begin position="5"/>
        <end position="113"/>
    </location>
</feature>
<feature type="chain" id="PRO_0000346702" description="Neurotrophic factor BDNF">
    <location>
        <begin position="114"/>
        <end position="222" status="greater than"/>
    </location>
</feature>
<feature type="glycosylation site" description="N-linked (GlcNAc...) asparagine" evidence="2">
    <location>
        <position position="106"/>
    </location>
</feature>
<feature type="disulfide bond" evidence="1">
    <location>
        <begin position="126"/>
        <end position="193"/>
    </location>
</feature>
<feature type="disulfide bond" evidence="1">
    <location>
        <begin position="171"/>
        <end position="222"/>
    </location>
</feature>
<feature type="non-terminal residue">
    <location>
        <position position="1"/>
    </location>
</feature>
<feature type="non-terminal residue">
    <location>
        <position position="222"/>
    </location>
</feature>
<gene>
    <name type="primary">BDNF</name>
</gene>
<evidence type="ECO:0000250" key="1"/>
<evidence type="ECO:0000255" key="2"/>
<evidence type="ECO:0000305" key="3"/>
<organism>
    <name type="scientific">Xenopeltis unicolor</name>
    <name type="common">Sunbeam snake</name>
    <dbReference type="NCBI Taxonomy" id="196253"/>
    <lineage>
        <taxon>Eukaryota</taxon>
        <taxon>Metazoa</taxon>
        <taxon>Chordata</taxon>
        <taxon>Craniata</taxon>
        <taxon>Vertebrata</taxon>
        <taxon>Euteleostomi</taxon>
        <taxon>Lepidosauria</taxon>
        <taxon>Squamata</taxon>
        <taxon>Bifurcata</taxon>
        <taxon>Unidentata</taxon>
        <taxon>Episquamata</taxon>
        <taxon>Toxicofera</taxon>
        <taxon>Serpentes</taxon>
        <taxon>Henophidia</taxon>
        <taxon>Xenopeltidae</taxon>
        <taxon>Xenopeltis</taxon>
    </lineage>
</organism>
<dbReference type="EMBL" id="DQ465563">
    <property type="protein sequence ID" value="ABF56545.1"/>
    <property type="molecule type" value="Genomic_DNA"/>
</dbReference>
<dbReference type="SMR" id="Q1HN38"/>
<dbReference type="GlyCosmos" id="Q1HN38">
    <property type="glycosylation" value="1 site, No reported glycans"/>
</dbReference>
<dbReference type="GO" id="GO:0030424">
    <property type="term" value="C:axon"/>
    <property type="evidence" value="ECO:0007669"/>
    <property type="project" value="TreeGrafter"/>
</dbReference>
<dbReference type="GO" id="GO:0030425">
    <property type="term" value="C:dendrite"/>
    <property type="evidence" value="ECO:0007669"/>
    <property type="project" value="TreeGrafter"/>
</dbReference>
<dbReference type="GO" id="GO:0005615">
    <property type="term" value="C:extracellular space"/>
    <property type="evidence" value="ECO:0007669"/>
    <property type="project" value="TreeGrafter"/>
</dbReference>
<dbReference type="GO" id="GO:0008021">
    <property type="term" value="C:synaptic vesicle"/>
    <property type="evidence" value="ECO:0007669"/>
    <property type="project" value="TreeGrafter"/>
</dbReference>
<dbReference type="GO" id="GO:0008083">
    <property type="term" value="F:growth factor activity"/>
    <property type="evidence" value="ECO:0007669"/>
    <property type="project" value="UniProtKB-KW"/>
</dbReference>
<dbReference type="GO" id="GO:0005163">
    <property type="term" value="F:nerve growth factor receptor binding"/>
    <property type="evidence" value="ECO:0007669"/>
    <property type="project" value="TreeGrafter"/>
</dbReference>
<dbReference type="GO" id="GO:0007169">
    <property type="term" value="P:cell surface receptor protein tyrosine kinase signaling pathway"/>
    <property type="evidence" value="ECO:0007669"/>
    <property type="project" value="TreeGrafter"/>
</dbReference>
<dbReference type="GO" id="GO:0050804">
    <property type="term" value="P:modulation of chemical synaptic transmission"/>
    <property type="evidence" value="ECO:0007669"/>
    <property type="project" value="TreeGrafter"/>
</dbReference>
<dbReference type="GO" id="GO:0043524">
    <property type="term" value="P:negative regulation of neuron apoptotic process"/>
    <property type="evidence" value="ECO:0007669"/>
    <property type="project" value="TreeGrafter"/>
</dbReference>
<dbReference type="GO" id="GO:0021675">
    <property type="term" value="P:nerve development"/>
    <property type="evidence" value="ECO:0007669"/>
    <property type="project" value="TreeGrafter"/>
</dbReference>
<dbReference type="GO" id="GO:0038180">
    <property type="term" value="P:nerve growth factor signaling pathway"/>
    <property type="evidence" value="ECO:0007669"/>
    <property type="project" value="TreeGrafter"/>
</dbReference>
<dbReference type="GO" id="GO:0048812">
    <property type="term" value="P:neuron projection morphogenesis"/>
    <property type="evidence" value="ECO:0007669"/>
    <property type="project" value="TreeGrafter"/>
</dbReference>
<dbReference type="FunFam" id="2.10.90.10:FF:000002">
    <property type="entry name" value="Brain-derived neurotrophic factor"/>
    <property type="match status" value="1"/>
</dbReference>
<dbReference type="Gene3D" id="2.10.90.10">
    <property type="entry name" value="Cystine-knot cytokines"/>
    <property type="match status" value="1"/>
</dbReference>
<dbReference type="InterPro" id="IPR020430">
    <property type="entry name" value="Brain-der_neurotrophic_factor"/>
</dbReference>
<dbReference type="InterPro" id="IPR029034">
    <property type="entry name" value="Cystine-knot_cytokine"/>
</dbReference>
<dbReference type="InterPro" id="IPR020408">
    <property type="entry name" value="Nerve_growth_factor-like"/>
</dbReference>
<dbReference type="InterPro" id="IPR002072">
    <property type="entry name" value="Nerve_growth_factor-rel"/>
</dbReference>
<dbReference type="InterPro" id="IPR019846">
    <property type="entry name" value="Nerve_growth_factor_CS"/>
</dbReference>
<dbReference type="PANTHER" id="PTHR11589:SF3">
    <property type="entry name" value="BRAIN-DERIVED NEUROTROPHIC FACTOR"/>
    <property type="match status" value="1"/>
</dbReference>
<dbReference type="PANTHER" id="PTHR11589">
    <property type="entry name" value="NERVE GROWTH FACTOR NGF -RELATED"/>
    <property type="match status" value="1"/>
</dbReference>
<dbReference type="Pfam" id="PF00243">
    <property type="entry name" value="NGF"/>
    <property type="match status" value="1"/>
</dbReference>
<dbReference type="PIRSF" id="PIRSF001789">
    <property type="entry name" value="NGF"/>
    <property type="match status" value="1"/>
</dbReference>
<dbReference type="PRINTS" id="PR01912">
    <property type="entry name" value="BDNFACTOR"/>
</dbReference>
<dbReference type="PRINTS" id="PR00268">
    <property type="entry name" value="NGF"/>
</dbReference>
<dbReference type="SMART" id="SM00140">
    <property type="entry name" value="NGF"/>
    <property type="match status" value="1"/>
</dbReference>
<dbReference type="SUPFAM" id="SSF57501">
    <property type="entry name" value="Cystine-knot cytokines"/>
    <property type="match status" value="1"/>
</dbReference>
<dbReference type="PROSITE" id="PS00248">
    <property type="entry name" value="NGF_1"/>
    <property type="match status" value="1"/>
</dbReference>
<dbReference type="PROSITE" id="PS50270">
    <property type="entry name" value="NGF_2"/>
    <property type="match status" value="1"/>
</dbReference>
<protein>
    <recommendedName>
        <fullName evidence="3">Neurotrophic factor BDNF precursor form</fullName>
        <shortName>proBDNF</shortName>
    </recommendedName>
    <alternativeName>
        <fullName>Brain-derived neurotrophic factor</fullName>
    </alternativeName>
    <component>
        <recommendedName>
            <fullName>Neurotrophic factor BDNF</fullName>
        </recommendedName>
    </component>
</protein>
<reference key="1">
    <citation type="journal article" date="2006" name="Mol. Phylogenet. Evol.">
        <title>Dispersal and vicariance: the complex evolutionary history of boid snakes.</title>
        <authorList>
            <person name="Noonan B.P."/>
            <person name="Chippindale P.T."/>
        </authorList>
    </citation>
    <scope>NUCLEOTIDE SEQUENCE [GENOMIC DNA]</scope>
</reference>
<keyword id="KW-0165">Cleavage on pair of basic residues</keyword>
<keyword id="KW-1015">Disulfide bond</keyword>
<keyword id="KW-0325">Glycoprotein</keyword>
<keyword id="KW-0339">Growth factor</keyword>
<keyword id="KW-0964">Secreted</keyword>
<keyword id="KW-0732">Signal</keyword>
<accession>Q1HN38</accession>
<proteinExistence type="inferred from homology"/>
<sequence>CMKAAPMKEVSVRGQGSLVYPGLRTQGNLETLSGPNDATRGLTSLADTFEHVIEELLDEQQVIQPSKENKDADLYSSRVMLSSQVPLEPPLLFLLEEYKNYLDAANMSMRVRRHSDPARRGELSVCDSTSEWVTAAEKKTAVDMSGATVTVLEKVPVPKGQLKQYFYETKCSSKGYAKEGCRGIDKRYWNSQCRTTQSYVRALTMDNKKRVGWRFIRIDTSC</sequence>
<name>BDNF_XENUN</name>
<comment type="function">
    <text evidence="1">Promotes the survival of neuronal populations that are all located either in the central nervous system or directly connected to it.</text>
</comment>
<comment type="subcellular location">
    <subcellularLocation>
        <location evidence="1">Secreted</location>
    </subcellularLocation>
</comment>
<comment type="similarity">
    <text evidence="3">Belongs to the NGF-beta family.</text>
</comment>